<organism>
    <name type="scientific">Aspergillus niger</name>
    <dbReference type="NCBI Taxonomy" id="5061"/>
    <lineage>
        <taxon>Eukaryota</taxon>
        <taxon>Fungi</taxon>
        <taxon>Dikarya</taxon>
        <taxon>Ascomycota</taxon>
        <taxon>Pezizomycotina</taxon>
        <taxon>Eurotiomycetes</taxon>
        <taxon>Eurotiomycetidae</taxon>
        <taxon>Eurotiales</taxon>
        <taxon>Aspergillaceae</taxon>
        <taxon>Aspergillus</taxon>
        <taxon>Aspergillus subgen. Circumdati</taxon>
    </lineage>
</organism>
<proteinExistence type="inferred from homology"/>
<sequence>MTSKCTLPDLPYDYDALEPIISKQIMELHHKKHHQTYVNNLNAALASQASALDSNDITQLISIQQKLKFNGGGHINHSLFWKNLARYDSPATNLERSAPSLKDAIEKQWGSVKNFTDAFEAVLLGIQGSGWGWLVSSGKTGFLEIVTTKDQDPVTGPIPVFGVDMWEHAYYLQYLNNKASYVQNIWKVINWEEAEHRYLNGTEELGSLKL</sequence>
<protein>
    <recommendedName>
        <fullName>Superoxide dismutase [Mn], mitochondrial</fullName>
        <ecNumber>1.15.1.1</ecNumber>
    </recommendedName>
</protein>
<keyword id="KW-0464">Manganese</keyword>
<keyword id="KW-0479">Metal-binding</keyword>
<keyword id="KW-0496">Mitochondrion</keyword>
<keyword id="KW-0560">Oxidoreductase</keyword>
<keyword id="KW-0809">Transit peptide</keyword>
<dbReference type="EC" id="1.15.1.1"/>
<dbReference type="EMBL" id="AJ812006">
    <property type="protein sequence ID" value="CAH19233.1"/>
    <property type="molecule type" value="Genomic_DNA"/>
</dbReference>
<dbReference type="SMR" id="Q3MSU9"/>
<dbReference type="PaxDb" id="5061-CADANGAP00001210"/>
<dbReference type="VEuPathDB" id="FungiDB:An01g12530"/>
<dbReference type="VEuPathDB" id="FungiDB:ASPNIDRAFT2_1117857"/>
<dbReference type="VEuPathDB" id="FungiDB:ATCC64974_13320"/>
<dbReference type="VEuPathDB" id="FungiDB:M747DRAFT_298480"/>
<dbReference type="eggNOG" id="KOG0876">
    <property type="taxonomic scope" value="Eukaryota"/>
</dbReference>
<dbReference type="GO" id="GO:0005759">
    <property type="term" value="C:mitochondrial matrix"/>
    <property type="evidence" value="ECO:0007669"/>
    <property type="project" value="UniProtKB-SubCell"/>
</dbReference>
<dbReference type="GO" id="GO:0030145">
    <property type="term" value="F:manganese ion binding"/>
    <property type="evidence" value="ECO:0007669"/>
    <property type="project" value="TreeGrafter"/>
</dbReference>
<dbReference type="GO" id="GO:0004784">
    <property type="term" value="F:superoxide dismutase activity"/>
    <property type="evidence" value="ECO:0007669"/>
    <property type="project" value="UniProtKB-EC"/>
</dbReference>
<dbReference type="FunFam" id="1.10.287.990:FF:000001">
    <property type="entry name" value="Superoxide dismutase"/>
    <property type="match status" value="1"/>
</dbReference>
<dbReference type="FunFam" id="3.55.40.20:FF:000004">
    <property type="entry name" value="Superoxide dismutase [Fe]"/>
    <property type="match status" value="1"/>
</dbReference>
<dbReference type="Gene3D" id="1.10.287.990">
    <property type="entry name" value="Fe,Mn superoxide dismutase (SOD) domain"/>
    <property type="match status" value="1"/>
</dbReference>
<dbReference type="Gene3D" id="3.55.40.20">
    <property type="entry name" value="Iron/manganese superoxide dismutase, C-terminal domain"/>
    <property type="match status" value="1"/>
</dbReference>
<dbReference type="InterPro" id="IPR050265">
    <property type="entry name" value="Fe/Mn_Superoxide_Dismutase"/>
</dbReference>
<dbReference type="InterPro" id="IPR001189">
    <property type="entry name" value="Mn/Fe_SOD"/>
</dbReference>
<dbReference type="InterPro" id="IPR019833">
    <property type="entry name" value="Mn/Fe_SOD_BS"/>
</dbReference>
<dbReference type="InterPro" id="IPR019832">
    <property type="entry name" value="Mn/Fe_SOD_C"/>
</dbReference>
<dbReference type="InterPro" id="IPR019831">
    <property type="entry name" value="Mn/Fe_SOD_N"/>
</dbReference>
<dbReference type="InterPro" id="IPR036324">
    <property type="entry name" value="Mn/Fe_SOD_N_sf"/>
</dbReference>
<dbReference type="InterPro" id="IPR036314">
    <property type="entry name" value="SOD_C_sf"/>
</dbReference>
<dbReference type="PANTHER" id="PTHR11404:SF29">
    <property type="entry name" value="SUPEROXIDE DISMUTASE"/>
    <property type="match status" value="1"/>
</dbReference>
<dbReference type="PANTHER" id="PTHR11404">
    <property type="entry name" value="SUPEROXIDE DISMUTASE 2"/>
    <property type="match status" value="1"/>
</dbReference>
<dbReference type="Pfam" id="PF02777">
    <property type="entry name" value="Sod_Fe_C"/>
    <property type="match status" value="1"/>
</dbReference>
<dbReference type="Pfam" id="PF00081">
    <property type="entry name" value="Sod_Fe_N"/>
    <property type="match status" value="1"/>
</dbReference>
<dbReference type="PIRSF" id="PIRSF000349">
    <property type="entry name" value="SODismutase"/>
    <property type="match status" value="1"/>
</dbReference>
<dbReference type="PRINTS" id="PR01703">
    <property type="entry name" value="MNSODISMTASE"/>
</dbReference>
<dbReference type="SUPFAM" id="SSF54719">
    <property type="entry name" value="Fe,Mn superoxide dismutase (SOD), C-terminal domain"/>
    <property type="match status" value="1"/>
</dbReference>
<dbReference type="SUPFAM" id="SSF46609">
    <property type="entry name" value="Fe,Mn superoxide dismutase (SOD), N-terminal domain"/>
    <property type="match status" value="1"/>
</dbReference>
<dbReference type="PROSITE" id="PS00088">
    <property type="entry name" value="SOD_MN"/>
    <property type="match status" value="1"/>
</dbReference>
<name>SODB_ASPNG</name>
<feature type="transit peptide" description="Mitochondrion" evidence="1">
    <location>
        <begin position="1"/>
        <end status="unknown"/>
    </location>
</feature>
<feature type="chain" id="PRO_0000043335" description="Superoxide dismutase [Mn], mitochondrial">
    <location>
        <begin status="unknown"/>
        <end position="210"/>
    </location>
</feature>
<feature type="binding site" evidence="1">
    <location>
        <position position="29"/>
    </location>
    <ligand>
        <name>Mn(2+)</name>
        <dbReference type="ChEBI" id="CHEBI:29035"/>
    </ligand>
</feature>
<feature type="binding site" evidence="1">
    <location>
        <position position="77"/>
    </location>
    <ligand>
        <name>Mn(2+)</name>
        <dbReference type="ChEBI" id="CHEBI:29035"/>
    </ligand>
</feature>
<feature type="binding site" evidence="1">
    <location>
        <position position="164"/>
    </location>
    <ligand>
        <name>Mn(2+)</name>
        <dbReference type="ChEBI" id="CHEBI:29035"/>
    </ligand>
</feature>
<feature type="binding site" evidence="1">
    <location>
        <position position="168"/>
    </location>
    <ligand>
        <name>Mn(2+)</name>
        <dbReference type="ChEBI" id="CHEBI:29035"/>
    </ligand>
</feature>
<evidence type="ECO:0000250" key="1"/>
<evidence type="ECO:0000305" key="2"/>
<accession>Q3MSU9</accession>
<comment type="function">
    <text evidence="1">Destroys superoxide anion radicals which are normally produced within the cells and which are toxic to biological systems.</text>
</comment>
<comment type="catalytic activity">
    <reaction>
        <text>2 superoxide + 2 H(+) = H2O2 + O2</text>
        <dbReference type="Rhea" id="RHEA:20696"/>
        <dbReference type="ChEBI" id="CHEBI:15378"/>
        <dbReference type="ChEBI" id="CHEBI:15379"/>
        <dbReference type="ChEBI" id="CHEBI:16240"/>
        <dbReference type="ChEBI" id="CHEBI:18421"/>
        <dbReference type="EC" id="1.15.1.1"/>
    </reaction>
</comment>
<comment type="cofactor">
    <cofactor evidence="1">
        <name>Mn(2+)</name>
        <dbReference type="ChEBI" id="CHEBI:29035"/>
    </cofactor>
    <text evidence="1">Binds 1 Mn(2+) ion per subunit.</text>
</comment>
<comment type="subunit">
    <text evidence="1">Homotetramer.</text>
</comment>
<comment type="subcellular location">
    <subcellularLocation>
        <location evidence="1">Mitochondrion matrix</location>
    </subcellularLocation>
</comment>
<comment type="similarity">
    <text evidence="2">Belongs to the iron/manganese superoxide dismutase family.</text>
</comment>
<gene>
    <name type="primary">sodB</name>
</gene>
<reference key="1">
    <citation type="journal article" date="2005" name="Mol. Genet. Genomics">
        <title>UPR-independent dithiothreitol stress-induced genes in Aspergillus niger.</title>
        <authorList>
            <person name="MacKenzie D.A."/>
            <person name="Guillemette T."/>
            <person name="Al-Sheikh H."/>
            <person name="Watson A.J."/>
            <person name="Jeenes D.J."/>
            <person name="Wongwathanarat P."/>
            <person name="Dunn-Coleman N.S."/>
            <person name="van Peij N."/>
            <person name="Archer D.B."/>
        </authorList>
    </citation>
    <scope>NUCLEOTIDE SEQUENCE [GENOMIC DNA]</scope>
</reference>